<evidence type="ECO:0000255" key="1">
    <source>
        <dbReference type="HAMAP-Rule" id="MF_00210"/>
    </source>
</evidence>
<comment type="function">
    <text evidence="1">Catalyzes the transfer of the enolpyruvyl moiety of phosphoenolpyruvate (PEP) to the 5-hydroxyl of shikimate-3-phosphate (S3P) to produce enolpyruvyl shikimate-3-phosphate and inorganic phosphate.</text>
</comment>
<comment type="catalytic activity">
    <reaction evidence="1">
        <text>3-phosphoshikimate + phosphoenolpyruvate = 5-O-(1-carboxyvinyl)-3-phosphoshikimate + phosphate</text>
        <dbReference type="Rhea" id="RHEA:21256"/>
        <dbReference type="ChEBI" id="CHEBI:43474"/>
        <dbReference type="ChEBI" id="CHEBI:57701"/>
        <dbReference type="ChEBI" id="CHEBI:58702"/>
        <dbReference type="ChEBI" id="CHEBI:145989"/>
        <dbReference type="EC" id="2.5.1.19"/>
    </reaction>
    <physiologicalReaction direction="left-to-right" evidence="1">
        <dbReference type="Rhea" id="RHEA:21257"/>
    </physiologicalReaction>
</comment>
<comment type="pathway">
    <text evidence="1">Metabolic intermediate biosynthesis; chorismate biosynthesis; chorismate from D-erythrose 4-phosphate and phosphoenolpyruvate: step 6/7.</text>
</comment>
<comment type="subunit">
    <text evidence="1">Monomer.</text>
</comment>
<comment type="subcellular location">
    <subcellularLocation>
        <location evidence="1">Cytoplasm</location>
    </subcellularLocation>
</comment>
<comment type="similarity">
    <text evidence="1">Belongs to the EPSP synthase family.</text>
</comment>
<gene>
    <name evidence="1" type="primary">aroA</name>
    <name type="ordered locus">Gmet_0864</name>
</gene>
<dbReference type="EC" id="2.5.1.19" evidence="1"/>
<dbReference type="EMBL" id="CP000148">
    <property type="protein sequence ID" value="ABB31106.1"/>
    <property type="molecule type" value="Genomic_DNA"/>
</dbReference>
<dbReference type="RefSeq" id="WP_004513010.1">
    <property type="nucleotide sequence ID" value="NC_007517.1"/>
</dbReference>
<dbReference type="SMR" id="Q39XB8"/>
<dbReference type="STRING" id="269799.Gmet_0864"/>
<dbReference type="KEGG" id="gme:Gmet_0864"/>
<dbReference type="eggNOG" id="COG0128">
    <property type="taxonomic scope" value="Bacteria"/>
</dbReference>
<dbReference type="HOGENOM" id="CLU_024321_0_1_7"/>
<dbReference type="UniPathway" id="UPA00053">
    <property type="reaction ID" value="UER00089"/>
</dbReference>
<dbReference type="Proteomes" id="UP000007073">
    <property type="component" value="Chromosome"/>
</dbReference>
<dbReference type="GO" id="GO:0005737">
    <property type="term" value="C:cytoplasm"/>
    <property type="evidence" value="ECO:0007669"/>
    <property type="project" value="UniProtKB-SubCell"/>
</dbReference>
<dbReference type="GO" id="GO:0003866">
    <property type="term" value="F:3-phosphoshikimate 1-carboxyvinyltransferase activity"/>
    <property type="evidence" value="ECO:0007669"/>
    <property type="project" value="UniProtKB-UniRule"/>
</dbReference>
<dbReference type="GO" id="GO:0008652">
    <property type="term" value="P:amino acid biosynthetic process"/>
    <property type="evidence" value="ECO:0007669"/>
    <property type="project" value="UniProtKB-KW"/>
</dbReference>
<dbReference type="GO" id="GO:0009073">
    <property type="term" value="P:aromatic amino acid family biosynthetic process"/>
    <property type="evidence" value="ECO:0007669"/>
    <property type="project" value="UniProtKB-KW"/>
</dbReference>
<dbReference type="GO" id="GO:0009423">
    <property type="term" value="P:chorismate biosynthetic process"/>
    <property type="evidence" value="ECO:0007669"/>
    <property type="project" value="UniProtKB-UniRule"/>
</dbReference>
<dbReference type="CDD" id="cd01556">
    <property type="entry name" value="EPSP_synthase"/>
    <property type="match status" value="1"/>
</dbReference>
<dbReference type="FunFam" id="3.65.10.10:FF:000005">
    <property type="entry name" value="3-phosphoshikimate 1-carboxyvinyltransferase"/>
    <property type="match status" value="1"/>
</dbReference>
<dbReference type="FunFam" id="3.65.10.10:FF:000006">
    <property type="entry name" value="3-phosphoshikimate 1-carboxyvinyltransferase"/>
    <property type="match status" value="1"/>
</dbReference>
<dbReference type="Gene3D" id="3.65.10.10">
    <property type="entry name" value="Enolpyruvate transferase domain"/>
    <property type="match status" value="2"/>
</dbReference>
<dbReference type="HAMAP" id="MF_00210">
    <property type="entry name" value="EPSP_synth"/>
    <property type="match status" value="1"/>
</dbReference>
<dbReference type="InterPro" id="IPR001986">
    <property type="entry name" value="Enolpyruvate_Tfrase_dom"/>
</dbReference>
<dbReference type="InterPro" id="IPR036968">
    <property type="entry name" value="Enolpyruvate_Tfrase_sf"/>
</dbReference>
<dbReference type="InterPro" id="IPR006264">
    <property type="entry name" value="EPSP_synthase"/>
</dbReference>
<dbReference type="InterPro" id="IPR023193">
    <property type="entry name" value="EPSP_synthase_CS"/>
</dbReference>
<dbReference type="InterPro" id="IPR013792">
    <property type="entry name" value="RNA3'P_cycl/enolpyr_Trfase_a/b"/>
</dbReference>
<dbReference type="NCBIfam" id="TIGR01356">
    <property type="entry name" value="aroA"/>
    <property type="match status" value="1"/>
</dbReference>
<dbReference type="PANTHER" id="PTHR21090">
    <property type="entry name" value="AROM/DEHYDROQUINATE SYNTHASE"/>
    <property type="match status" value="1"/>
</dbReference>
<dbReference type="PANTHER" id="PTHR21090:SF5">
    <property type="entry name" value="PENTAFUNCTIONAL AROM POLYPEPTIDE"/>
    <property type="match status" value="1"/>
</dbReference>
<dbReference type="Pfam" id="PF00275">
    <property type="entry name" value="EPSP_synthase"/>
    <property type="match status" value="1"/>
</dbReference>
<dbReference type="PIRSF" id="PIRSF000505">
    <property type="entry name" value="EPSPS"/>
    <property type="match status" value="1"/>
</dbReference>
<dbReference type="SUPFAM" id="SSF55205">
    <property type="entry name" value="EPT/RTPC-like"/>
    <property type="match status" value="1"/>
</dbReference>
<dbReference type="PROSITE" id="PS00104">
    <property type="entry name" value="EPSP_SYNTHASE_1"/>
    <property type="match status" value="1"/>
</dbReference>
<dbReference type="PROSITE" id="PS00885">
    <property type="entry name" value="EPSP_SYNTHASE_2"/>
    <property type="match status" value="1"/>
</dbReference>
<protein>
    <recommendedName>
        <fullName evidence="1">3-phosphoshikimate 1-carboxyvinyltransferase</fullName>
        <ecNumber evidence="1">2.5.1.19</ecNumber>
    </recommendedName>
    <alternativeName>
        <fullName evidence="1">5-enolpyruvylshikimate-3-phosphate synthase</fullName>
        <shortName evidence="1">EPSP synthase</shortName>
        <shortName evidence="1">EPSPS</shortName>
    </alternativeName>
</protein>
<accession>Q39XB8</accession>
<proteinExistence type="inferred from homology"/>
<feature type="chain" id="PRO_0000325346" description="3-phosphoshikimate 1-carboxyvinyltransferase">
    <location>
        <begin position="1"/>
        <end position="429"/>
    </location>
</feature>
<feature type="active site" description="Proton acceptor" evidence="1">
    <location>
        <position position="315"/>
    </location>
</feature>
<feature type="binding site" evidence="1">
    <location>
        <position position="22"/>
    </location>
    <ligand>
        <name>3-phosphoshikimate</name>
        <dbReference type="ChEBI" id="CHEBI:145989"/>
    </ligand>
</feature>
<feature type="binding site" evidence="1">
    <location>
        <position position="22"/>
    </location>
    <ligand>
        <name>phosphoenolpyruvate</name>
        <dbReference type="ChEBI" id="CHEBI:58702"/>
    </ligand>
</feature>
<feature type="binding site" evidence="1">
    <location>
        <position position="23"/>
    </location>
    <ligand>
        <name>3-phosphoshikimate</name>
        <dbReference type="ChEBI" id="CHEBI:145989"/>
    </ligand>
</feature>
<feature type="binding site" evidence="1">
    <location>
        <position position="27"/>
    </location>
    <ligand>
        <name>3-phosphoshikimate</name>
        <dbReference type="ChEBI" id="CHEBI:145989"/>
    </ligand>
</feature>
<feature type="binding site" evidence="1">
    <location>
        <position position="94"/>
    </location>
    <ligand>
        <name>phosphoenolpyruvate</name>
        <dbReference type="ChEBI" id="CHEBI:58702"/>
    </ligand>
</feature>
<feature type="binding site" evidence="1">
    <location>
        <position position="122"/>
    </location>
    <ligand>
        <name>phosphoenolpyruvate</name>
        <dbReference type="ChEBI" id="CHEBI:58702"/>
    </ligand>
</feature>
<feature type="binding site" evidence="1">
    <location>
        <position position="167"/>
    </location>
    <ligand>
        <name>3-phosphoshikimate</name>
        <dbReference type="ChEBI" id="CHEBI:145989"/>
    </ligand>
</feature>
<feature type="binding site" evidence="1">
    <location>
        <position position="169"/>
    </location>
    <ligand>
        <name>3-phosphoshikimate</name>
        <dbReference type="ChEBI" id="CHEBI:145989"/>
    </ligand>
</feature>
<feature type="binding site" evidence="1">
    <location>
        <position position="169"/>
    </location>
    <ligand>
        <name>phosphoenolpyruvate</name>
        <dbReference type="ChEBI" id="CHEBI:58702"/>
    </ligand>
</feature>
<feature type="binding site" evidence="1">
    <location>
        <position position="315"/>
    </location>
    <ligand>
        <name>3-phosphoshikimate</name>
        <dbReference type="ChEBI" id="CHEBI:145989"/>
    </ligand>
</feature>
<feature type="binding site" evidence="1">
    <location>
        <position position="342"/>
    </location>
    <ligand>
        <name>3-phosphoshikimate</name>
        <dbReference type="ChEBI" id="CHEBI:145989"/>
    </ligand>
</feature>
<feature type="binding site" evidence="1">
    <location>
        <position position="346"/>
    </location>
    <ligand>
        <name>phosphoenolpyruvate</name>
        <dbReference type="ChEBI" id="CHEBI:58702"/>
    </ligand>
</feature>
<feature type="binding site" evidence="1">
    <location>
        <position position="388"/>
    </location>
    <ligand>
        <name>phosphoenolpyruvate</name>
        <dbReference type="ChEBI" id="CHEBI:58702"/>
    </ligand>
</feature>
<sequence>MQSYTVRPAKGIRGEITVPGDKSISHRSIMLGSIARGETTVRGFLRGEDNIATLNAFRAMGVVIDDDGETLRIAGKGLRGLAEPTDVLDCGNSGTSMRLLTGLLAPQRFYSVLSGDQYLRRRPMRRVVEPLSRMGACIHGREGGEKAPLAIVGRDLKGISYTSSVASAQVKSALMLAGLYAEGETRVTEPHLSRDHSERMFRHFGADIENGPAGVVVRGGRELEGRDIIVPGDISSAAFFMVAALIVPGSELLIRGVGVNPTRTGIIDILTAMGGSLELLDQREVSGEPVADILVRSSRLKGIEIAGEVVPRAIDEFPVICVAAAVAEGRTVVREARELRVKETDRIAAMATNLRAVGVTVTESEDGMDIEGAEQIAAGTVESFGDHRIAMSMLIAGLTAGGDITVTDTECIGTSFPTFFPLLEKVAAR</sequence>
<organism>
    <name type="scientific">Geobacter metallireducens (strain ATCC 53774 / DSM 7210 / GS-15)</name>
    <dbReference type="NCBI Taxonomy" id="269799"/>
    <lineage>
        <taxon>Bacteria</taxon>
        <taxon>Pseudomonadati</taxon>
        <taxon>Thermodesulfobacteriota</taxon>
        <taxon>Desulfuromonadia</taxon>
        <taxon>Geobacterales</taxon>
        <taxon>Geobacteraceae</taxon>
        <taxon>Geobacter</taxon>
    </lineage>
</organism>
<keyword id="KW-0028">Amino-acid biosynthesis</keyword>
<keyword id="KW-0057">Aromatic amino acid biosynthesis</keyword>
<keyword id="KW-0963">Cytoplasm</keyword>
<keyword id="KW-1185">Reference proteome</keyword>
<keyword id="KW-0808">Transferase</keyword>
<reference key="1">
    <citation type="journal article" date="2009" name="BMC Microbiol.">
        <title>The genome sequence of Geobacter metallireducens: features of metabolism, physiology and regulation common and dissimilar to Geobacter sulfurreducens.</title>
        <authorList>
            <person name="Aklujkar M."/>
            <person name="Krushkal J."/>
            <person name="DiBartolo G."/>
            <person name="Lapidus A."/>
            <person name="Land M.L."/>
            <person name="Lovley D.R."/>
        </authorList>
    </citation>
    <scope>NUCLEOTIDE SEQUENCE [LARGE SCALE GENOMIC DNA]</scope>
    <source>
        <strain>ATCC 53774 / DSM 7210 / GS-15</strain>
    </source>
</reference>
<name>AROA_GEOMG</name>